<name>URE1_CLOPF</name>
<geneLocation type="plasmid"/>
<reference key="1">
    <citation type="journal article" date="1997" name="Infect. Immun.">
        <title>Clostridium perfringens urease genes are plasmid borne.</title>
        <authorList>
            <person name="Dupuy B."/>
            <person name="Daube G."/>
            <person name="Popoff M.R."/>
            <person name="Cole S.T."/>
        </authorList>
    </citation>
    <scope>NUCLEOTIDE SEQUENCE [GENOMIC DNA]</scope>
    <source>
        <strain>CP76</strain>
    </source>
</reference>
<proteinExistence type="inferred from homology"/>
<feature type="chain" id="PRO_0000067540" description="Urease subunit alpha">
    <location>
        <begin position="1"/>
        <end position="587"/>
    </location>
</feature>
<feature type="domain" description="Urease" evidence="1">
    <location>
        <begin position="134"/>
        <end position="572"/>
    </location>
</feature>
<feature type="active site" description="Proton donor" evidence="1">
    <location>
        <position position="325"/>
    </location>
</feature>
<feature type="binding site" evidence="1">
    <location>
        <position position="139"/>
    </location>
    <ligand>
        <name>Ni(2+)</name>
        <dbReference type="ChEBI" id="CHEBI:49786"/>
        <label>1</label>
    </ligand>
</feature>
<feature type="binding site" evidence="1">
    <location>
        <position position="141"/>
    </location>
    <ligand>
        <name>Ni(2+)</name>
        <dbReference type="ChEBI" id="CHEBI:49786"/>
        <label>1</label>
    </ligand>
</feature>
<feature type="binding site" description="via carbamate group" evidence="1">
    <location>
        <position position="222"/>
    </location>
    <ligand>
        <name>Ni(2+)</name>
        <dbReference type="ChEBI" id="CHEBI:49786"/>
        <label>1</label>
    </ligand>
</feature>
<feature type="binding site" description="via carbamate group" evidence="1">
    <location>
        <position position="222"/>
    </location>
    <ligand>
        <name>Ni(2+)</name>
        <dbReference type="ChEBI" id="CHEBI:49786"/>
        <label>2</label>
    </ligand>
</feature>
<feature type="binding site" evidence="1">
    <location>
        <position position="224"/>
    </location>
    <ligand>
        <name>substrate</name>
    </ligand>
</feature>
<feature type="binding site" evidence="1">
    <location>
        <position position="251"/>
    </location>
    <ligand>
        <name>Ni(2+)</name>
        <dbReference type="ChEBI" id="CHEBI:49786"/>
        <label>2</label>
    </ligand>
</feature>
<feature type="binding site" evidence="1">
    <location>
        <position position="277"/>
    </location>
    <ligand>
        <name>Ni(2+)</name>
        <dbReference type="ChEBI" id="CHEBI:49786"/>
        <label>2</label>
    </ligand>
</feature>
<feature type="binding site" evidence="1">
    <location>
        <position position="365"/>
    </location>
    <ligand>
        <name>Ni(2+)</name>
        <dbReference type="ChEBI" id="CHEBI:49786"/>
        <label>1</label>
    </ligand>
</feature>
<feature type="modified residue" description="N6-carboxylysine" evidence="1">
    <location>
        <position position="222"/>
    </location>
</feature>
<sequence>MSFEISREQYAGMFGPTTGDSIRLGDTNLFAKIEKDMTVYGDESKFGGGKCLRDGMGQSATELRRDNPKVVDLIITSAVILDYTGIYKADIGIRDGKIVAIGNGGNPSIMDNVDFIVGSSTEALSGEGLIVTAGGIDTHVHFITPAIAYSALENGTTTIIGGGTGPADGTNSATSTPGAWNIHQMLRAAEGMPVNMGIQGKAGGAIMDTTAEQIEAGAMALKVHEDWGATLSCIDHALETADKYDVQVSLHSDTLNETGFVEDTIKSIGGRCIHSYHTEGAGGGHAPDLMKVASKNNIIPSSTSPTNPYTVDILPEHLDMLMVCHHLDPKIPEDVRFADSRIRKQTIAAEDVLQDMGALSIMSSDTMAMGRIGEVIMRSWQLADKMKKQRGPLEGDSEYIDNNRIKRYISKYTINPAIAEGISDYVGSIEEGKYADLVLWEPAMFGAKPKMILKSGMIAYGVMGDSNASIPTTQPRTMRELFGLTGKSRQHVNMTFVSTYAYEHNIKEELGLERNVLPVHNVRTVTKKDMKFNSETPKIEIDPLTYDVTVDGKLITCDPARELPLAQRYLYTNLDKINILVYYKKIT</sequence>
<keyword id="KW-0963">Cytoplasm</keyword>
<keyword id="KW-0378">Hydrolase</keyword>
<keyword id="KW-0479">Metal-binding</keyword>
<keyword id="KW-0533">Nickel</keyword>
<keyword id="KW-0614">Plasmid</keyword>
<comment type="catalytic activity">
    <reaction evidence="1">
        <text>urea + 2 H2O + H(+) = hydrogencarbonate + 2 NH4(+)</text>
        <dbReference type="Rhea" id="RHEA:20557"/>
        <dbReference type="ChEBI" id="CHEBI:15377"/>
        <dbReference type="ChEBI" id="CHEBI:15378"/>
        <dbReference type="ChEBI" id="CHEBI:16199"/>
        <dbReference type="ChEBI" id="CHEBI:17544"/>
        <dbReference type="ChEBI" id="CHEBI:28938"/>
        <dbReference type="EC" id="3.5.1.5"/>
    </reaction>
</comment>
<comment type="cofactor">
    <cofactor evidence="1">
        <name>Ni cation</name>
        <dbReference type="ChEBI" id="CHEBI:25516"/>
    </cofactor>
    <text evidence="1">Binds 2 nickel ions per subunit.</text>
</comment>
<comment type="pathway">
    <text evidence="1">Nitrogen metabolism; urea degradation; CO(2) and NH(3) from urea (urease route): step 1/1.</text>
</comment>
<comment type="subunit">
    <text evidence="1">Heterotrimer of UreA (gamma), UreB (beta) and UreC (alpha) subunits. Three heterotrimers associate to form the active enzyme.</text>
</comment>
<comment type="subcellular location">
    <subcellularLocation>
        <location evidence="1">Cytoplasm</location>
    </subcellularLocation>
</comment>
<comment type="PTM">
    <text evidence="1">Carboxylation allows a single lysine to coordinate two nickel ions.</text>
</comment>
<comment type="similarity">
    <text evidence="1">Belongs to the metallo-dependent hydrolases superfamily. Urease alpha subunit family.</text>
</comment>
<dbReference type="EC" id="3.5.1.5" evidence="1"/>
<dbReference type="EMBL" id="Y10356">
    <property type="protein sequence ID" value="CAA71385.1"/>
    <property type="molecule type" value="Genomic_DNA"/>
</dbReference>
<dbReference type="SMR" id="P94669"/>
<dbReference type="MEROPS" id="M38.982"/>
<dbReference type="UniPathway" id="UPA00258">
    <property type="reaction ID" value="UER00370"/>
</dbReference>
<dbReference type="GO" id="GO:0005737">
    <property type="term" value="C:cytoplasm"/>
    <property type="evidence" value="ECO:0007669"/>
    <property type="project" value="UniProtKB-SubCell"/>
</dbReference>
<dbReference type="GO" id="GO:0016151">
    <property type="term" value="F:nickel cation binding"/>
    <property type="evidence" value="ECO:0007669"/>
    <property type="project" value="UniProtKB-UniRule"/>
</dbReference>
<dbReference type="GO" id="GO:0009039">
    <property type="term" value="F:urease activity"/>
    <property type="evidence" value="ECO:0007669"/>
    <property type="project" value="UniProtKB-UniRule"/>
</dbReference>
<dbReference type="GO" id="GO:0043419">
    <property type="term" value="P:urea catabolic process"/>
    <property type="evidence" value="ECO:0007669"/>
    <property type="project" value="UniProtKB-UniRule"/>
</dbReference>
<dbReference type="CDD" id="cd00375">
    <property type="entry name" value="Urease_alpha"/>
    <property type="match status" value="1"/>
</dbReference>
<dbReference type="Gene3D" id="3.20.20.140">
    <property type="entry name" value="Metal-dependent hydrolases"/>
    <property type="match status" value="1"/>
</dbReference>
<dbReference type="Gene3D" id="2.30.40.10">
    <property type="entry name" value="Urease, subunit C, domain 1"/>
    <property type="match status" value="1"/>
</dbReference>
<dbReference type="HAMAP" id="MF_01953">
    <property type="entry name" value="Urease_alpha"/>
    <property type="match status" value="1"/>
</dbReference>
<dbReference type="InterPro" id="IPR006680">
    <property type="entry name" value="Amidohydro-rel"/>
</dbReference>
<dbReference type="InterPro" id="IPR011059">
    <property type="entry name" value="Metal-dep_hydrolase_composite"/>
</dbReference>
<dbReference type="InterPro" id="IPR032466">
    <property type="entry name" value="Metal_Hydrolase"/>
</dbReference>
<dbReference type="InterPro" id="IPR011612">
    <property type="entry name" value="Urease_alpha_N_dom"/>
</dbReference>
<dbReference type="InterPro" id="IPR050112">
    <property type="entry name" value="Urease_alpha_subunit"/>
</dbReference>
<dbReference type="InterPro" id="IPR017950">
    <property type="entry name" value="Urease_AS"/>
</dbReference>
<dbReference type="InterPro" id="IPR005848">
    <property type="entry name" value="Urease_asu"/>
</dbReference>
<dbReference type="InterPro" id="IPR017951">
    <property type="entry name" value="Urease_asu_c"/>
</dbReference>
<dbReference type="InterPro" id="IPR029754">
    <property type="entry name" value="Urease_Ni-bd"/>
</dbReference>
<dbReference type="NCBIfam" id="NF009686">
    <property type="entry name" value="PRK13207.1"/>
    <property type="match status" value="1"/>
</dbReference>
<dbReference type="NCBIfam" id="TIGR01792">
    <property type="entry name" value="urease_alph"/>
    <property type="match status" value="1"/>
</dbReference>
<dbReference type="PANTHER" id="PTHR43440">
    <property type="entry name" value="UREASE"/>
    <property type="match status" value="1"/>
</dbReference>
<dbReference type="PANTHER" id="PTHR43440:SF1">
    <property type="entry name" value="UREASE"/>
    <property type="match status" value="1"/>
</dbReference>
<dbReference type="Pfam" id="PF01979">
    <property type="entry name" value="Amidohydro_1"/>
    <property type="match status" value="1"/>
</dbReference>
<dbReference type="Pfam" id="PF00449">
    <property type="entry name" value="Urease_alpha"/>
    <property type="match status" value="1"/>
</dbReference>
<dbReference type="PRINTS" id="PR01752">
    <property type="entry name" value="UREASE"/>
</dbReference>
<dbReference type="SUPFAM" id="SSF51338">
    <property type="entry name" value="Composite domain of metallo-dependent hydrolases"/>
    <property type="match status" value="2"/>
</dbReference>
<dbReference type="SUPFAM" id="SSF51556">
    <property type="entry name" value="Metallo-dependent hydrolases"/>
    <property type="match status" value="1"/>
</dbReference>
<dbReference type="PROSITE" id="PS01120">
    <property type="entry name" value="UREASE_1"/>
    <property type="match status" value="1"/>
</dbReference>
<dbReference type="PROSITE" id="PS00145">
    <property type="entry name" value="UREASE_2"/>
    <property type="match status" value="1"/>
</dbReference>
<dbReference type="PROSITE" id="PS51368">
    <property type="entry name" value="UREASE_3"/>
    <property type="match status" value="1"/>
</dbReference>
<accession>P94669</accession>
<organism>
    <name type="scientific">Clostridium perfringens</name>
    <dbReference type="NCBI Taxonomy" id="1502"/>
    <lineage>
        <taxon>Bacteria</taxon>
        <taxon>Bacillati</taxon>
        <taxon>Bacillota</taxon>
        <taxon>Clostridia</taxon>
        <taxon>Eubacteriales</taxon>
        <taxon>Clostridiaceae</taxon>
        <taxon>Clostridium</taxon>
    </lineage>
</organism>
<evidence type="ECO:0000255" key="1">
    <source>
        <dbReference type="HAMAP-Rule" id="MF_01953"/>
    </source>
</evidence>
<gene>
    <name evidence="1" type="primary">ureC</name>
</gene>
<protein>
    <recommendedName>
        <fullName evidence="1">Urease subunit alpha</fullName>
        <ecNumber evidence="1">3.5.1.5</ecNumber>
    </recommendedName>
    <alternativeName>
        <fullName evidence="1">Urea amidohydrolase subunit alpha</fullName>
    </alternativeName>
</protein>